<accession>P15766</accession>
<dbReference type="EMBL" id="X17498">
    <property type="protein sequence ID" value="CAC35457.1"/>
    <property type="molecule type" value="Genomic_DNA"/>
</dbReference>
<dbReference type="EMBL" id="U30821">
    <property type="protein sequence ID" value="AAA81231.1"/>
    <property type="molecule type" value="Genomic_DNA"/>
</dbReference>
<dbReference type="PIR" id="S12810">
    <property type="entry name" value="R5KT3"/>
</dbReference>
<dbReference type="RefSeq" id="NP_043200.1">
    <property type="nucleotide sequence ID" value="NC_001675.1"/>
</dbReference>
<dbReference type="SMR" id="P15766"/>
<dbReference type="GeneID" id="801536"/>
<dbReference type="GO" id="GO:0009842">
    <property type="term" value="C:cyanelle"/>
    <property type="evidence" value="ECO:0007669"/>
    <property type="project" value="UniProtKB-SubCell"/>
</dbReference>
<dbReference type="GO" id="GO:0022625">
    <property type="term" value="C:cytosolic large ribosomal subunit"/>
    <property type="evidence" value="ECO:0007669"/>
    <property type="project" value="TreeGrafter"/>
</dbReference>
<dbReference type="GO" id="GO:0019843">
    <property type="term" value="F:rRNA binding"/>
    <property type="evidence" value="ECO:0007669"/>
    <property type="project" value="UniProtKB-KW"/>
</dbReference>
<dbReference type="GO" id="GO:0003735">
    <property type="term" value="F:structural constituent of ribosome"/>
    <property type="evidence" value="ECO:0007669"/>
    <property type="project" value="InterPro"/>
</dbReference>
<dbReference type="GO" id="GO:0006412">
    <property type="term" value="P:translation"/>
    <property type="evidence" value="ECO:0007669"/>
    <property type="project" value="InterPro"/>
</dbReference>
<dbReference type="FunFam" id="3.30.160.810:FF:000001">
    <property type="entry name" value="50S ribosomal protein L3"/>
    <property type="match status" value="1"/>
</dbReference>
<dbReference type="FunFam" id="2.40.30.10:FF:000065">
    <property type="entry name" value="50S ribosomal protein L3, chloroplastic"/>
    <property type="match status" value="1"/>
</dbReference>
<dbReference type="Gene3D" id="3.30.160.810">
    <property type="match status" value="1"/>
</dbReference>
<dbReference type="Gene3D" id="2.40.30.10">
    <property type="entry name" value="Translation factors"/>
    <property type="match status" value="1"/>
</dbReference>
<dbReference type="HAMAP" id="MF_01325_B">
    <property type="entry name" value="Ribosomal_uL3_B"/>
    <property type="match status" value="1"/>
</dbReference>
<dbReference type="InterPro" id="IPR000597">
    <property type="entry name" value="Ribosomal_uL3"/>
</dbReference>
<dbReference type="InterPro" id="IPR019927">
    <property type="entry name" value="Ribosomal_uL3_bac/org-type"/>
</dbReference>
<dbReference type="InterPro" id="IPR019926">
    <property type="entry name" value="Ribosomal_uL3_CS"/>
</dbReference>
<dbReference type="InterPro" id="IPR009000">
    <property type="entry name" value="Transl_B-barrel_sf"/>
</dbReference>
<dbReference type="NCBIfam" id="TIGR03625">
    <property type="entry name" value="L3_bact"/>
    <property type="match status" value="1"/>
</dbReference>
<dbReference type="PANTHER" id="PTHR11229">
    <property type="entry name" value="50S RIBOSOMAL PROTEIN L3"/>
    <property type="match status" value="1"/>
</dbReference>
<dbReference type="PANTHER" id="PTHR11229:SF16">
    <property type="entry name" value="LARGE RIBOSOMAL SUBUNIT PROTEIN UL3C"/>
    <property type="match status" value="1"/>
</dbReference>
<dbReference type="Pfam" id="PF00297">
    <property type="entry name" value="Ribosomal_L3"/>
    <property type="match status" value="1"/>
</dbReference>
<dbReference type="SUPFAM" id="SSF50447">
    <property type="entry name" value="Translation proteins"/>
    <property type="match status" value="1"/>
</dbReference>
<dbReference type="PROSITE" id="PS00474">
    <property type="entry name" value="RIBOSOMAL_L3"/>
    <property type="match status" value="1"/>
</dbReference>
<gene>
    <name type="primary">rpl3</name>
</gene>
<proteinExistence type="inferred from homology"/>
<organism>
    <name type="scientific">Cyanophora paradoxa</name>
    <dbReference type="NCBI Taxonomy" id="2762"/>
    <lineage>
        <taxon>Eukaryota</taxon>
        <taxon>Glaucocystophyceae</taxon>
        <taxon>Cyanophoraceae</taxon>
        <taxon>Cyanophora</taxon>
    </lineage>
</organism>
<geneLocation type="cyanelle"/>
<sequence length="209" mass="22459">MSIGILGTKLGMTQIFDEAGNAIPVTIIQAGPCPITQIKTTATDGYNAIQVGYRETKEKNLTKAQLGHLQKTNNSALRVLQEFSIESSDSIEVEKPITVELFNDNDIVNIQGYSIGRGFSGYQKRHNFARGPMSHGSKNHRLPGSIGAGSTPGRVYPGTRMAGRKGDSKITIRGLKIVKVDSERSLLIVKGSVPGKPGGLLTITQVKKV</sequence>
<comment type="function">
    <text evidence="1">One of the primary rRNA binding proteins, it binds directly near the 3'-end of the 23S rRNA, where it nucleates assembly of the 50S subunit.</text>
</comment>
<comment type="subunit">
    <text>Part of the 50S ribosomal subunit.</text>
</comment>
<comment type="subcellular location">
    <subcellularLocation>
        <location>Plastid</location>
        <location>Cyanelle</location>
    </subcellularLocation>
</comment>
<comment type="similarity">
    <text evidence="3">Belongs to the universal ribosomal protein uL3 family.</text>
</comment>
<feature type="chain" id="PRO_0000077198" description="Large ribosomal subunit protein uL3c">
    <location>
        <begin position="1"/>
        <end position="209"/>
    </location>
</feature>
<feature type="region of interest" description="Disordered" evidence="2">
    <location>
        <begin position="132"/>
        <end position="154"/>
    </location>
</feature>
<evidence type="ECO:0000250" key="1"/>
<evidence type="ECO:0000256" key="2">
    <source>
        <dbReference type="SAM" id="MobiDB-lite"/>
    </source>
</evidence>
<evidence type="ECO:0000305" key="3"/>
<reference key="1">
    <citation type="journal article" date="1990" name="J. Mol. Evol.">
        <title>The nucleotide sequence of five ribosomal protein genes from the cyanelles of Cyanophora paradoxa: implications concerning the phylogenetic relationship between cyanelles and chloroplasts.</title>
        <authorList>
            <person name="Evrard J.L."/>
            <person name="Kuntz M."/>
            <person name="Weil J.H."/>
        </authorList>
    </citation>
    <scope>NUCLEOTIDE SEQUENCE [GENOMIC DNA]</scope>
    <source>
        <strain>UTEX LB 555 / Pringsheim</strain>
    </source>
</reference>
<reference key="2">
    <citation type="journal article" date="1990" name="Nucleic Acids Res.">
        <title>The cyanelle genome of Cyanophora paradoxa, unlike the chloroplast genome, codes for the ribosomal L3 protein.</title>
        <authorList>
            <person name="Evrard J.L."/>
            <person name="Johnson C."/>
            <person name="Janssen I."/>
            <person name="Loeffelhardt W."/>
            <person name="Weil J.H."/>
            <person name="Kuntz M."/>
        </authorList>
    </citation>
    <scope>NUCLEOTIDE SEQUENCE [GENOMIC DNA]</scope>
    <source>
        <strain>UTEX LB 555 / Pringsheim</strain>
    </source>
</reference>
<reference key="3">
    <citation type="journal article" date="1995" name="Plant Mol. Biol. Rep.">
        <title>Nucleotide sequence of the cyanelle DNA from Cyanophora paradoxa.</title>
        <authorList>
            <person name="Stirewalt V.L."/>
            <person name="Michalowski C.B."/>
            <person name="Loeffelhardt W."/>
            <person name="Bohnert H.J."/>
            <person name="Bryant D.A."/>
        </authorList>
    </citation>
    <scope>NUCLEOTIDE SEQUENCE [LARGE SCALE GENOMIC DNA]</scope>
    <source>
        <strain>UTEX LB 555 / Pringsheim</strain>
    </source>
</reference>
<reference key="4">
    <citation type="book" date="1997" name="Eukaryotism and symbiosis">
        <title>The complete sequence of the cyanelle genome of Cyanophora paradoxa: the genetic complexity of a primitive plastid.</title>
        <editorList>
            <person name="Schenk H.E.A."/>
            <person name="Herrmann R."/>
            <person name="Jeon K.W."/>
            <person name="Mueller N.E."/>
            <person name="Schwemmler W."/>
        </editorList>
        <authorList>
            <person name="Loeffelhardt W."/>
            <person name="Stirewalt V.L."/>
            <person name="Michalowski C.B."/>
            <person name="Annarella M."/>
            <person name="Farley J.Y."/>
            <person name="Schluchter W.M."/>
            <person name="Chung S."/>
            <person name="Newmann-Spallart C."/>
            <person name="Steiner J.M."/>
            <person name="Jakowitsch J."/>
            <person name="Bohnert H.J."/>
            <person name="Bryant D.A."/>
        </authorList>
    </citation>
    <scope>NUCLEOTIDE SEQUENCE [LARGE SCALE GENOMIC DNA]</scope>
    <source>
        <strain>UTEX LB 555 / Pringsheim</strain>
    </source>
</reference>
<protein>
    <recommendedName>
        <fullName evidence="3">Large ribosomal subunit protein uL3c</fullName>
    </recommendedName>
    <alternativeName>
        <fullName>50S ribosomal protein L3, cyanelle</fullName>
    </alternativeName>
</protein>
<name>RK3_CYAPA</name>
<keyword id="KW-0194">Cyanelle</keyword>
<keyword id="KW-0934">Plastid</keyword>
<keyword id="KW-0687">Ribonucleoprotein</keyword>
<keyword id="KW-0689">Ribosomal protein</keyword>
<keyword id="KW-0694">RNA-binding</keyword>
<keyword id="KW-0699">rRNA-binding</keyword>